<organism>
    <name type="scientific">Ectopseudomonas oleovorans</name>
    <name type="common">Pseudomonas oleovorans</name>
    <dbReference type="NCBI Taxonomy" id="301"/>
    <lineage>
        <taxon>Bacteria</taxon>
        <taxon>Pseudomonadati</taxon>
        <taxon>Pseudomonadota</taxon>
        <taxon>Gammaproteobacteria</taxon>
        <taxon>Pseudomonadales</taxon>
        <taxon>Pseudomonadaceae</taxon>
        <taxon>Ectopseudomonas</taxon>
    </lineage>
</organism>
<gene>
    <name type="primary">alkN</name>
</gene>
<feature type="chain" id="PRO_0000392222" description="Putative methyl-accepting chemotaxis AlkN">
    <location>
        <begin position="1"/>
        <end position="492"/>
    </location>
</feature>
<feature type="transmembrane region" description="Helical" evidence="2">
    <location>
        <begin position="9"/>
        <end position="29"/>
    </location>
</feature>
<feature type="transmembrane region" description="Helical" evidence="2">
    <location>
        <begin position="159"/>
        <end position="179"/>
    </location>
</feature>
<feature type="domain" description="HAMP" evidence="3">
    <location>
        <begin position="180"/>
        <end position="231"/>
    </location>
</feature>
<feature type="domain" description="Methyl-accepting transducer" evidence="4">
    <location>
        <begin position="236"/>
        <end position="472"/>
    </location>
</feature>
<comment type="function">
    <text evidence="1">Chemotactic-signal transducers respond to changes in the concentration of attractants and repellents in the environment, transduce a signal from the outside to the inside of the cell, and facilitate sensory adaptation through the variation of the level of methylation.</text>
</comment>
<comment type="pathway">
    <text evidence="5">Hydrocarbon metabolism; alkane degradation.</text>
</comment>
<comment type="subcellular location">
    <subcellularLocation>
        <location evidence="6">Membrane</location>
        <topology evidence="6">Multi-pass membrane protein</topology>
    </subcellularLocation>
</comment>
<comment type="similarity">
    <text evidence="6">Belongs to the methyl-accepting chemotaxis (MCP) protein family.</text>
</comment>
<sequence length="492" mass="53878">MNCSLRCRFFLILVMAGFSFFVALFGMRLMHKMAEFAYFEREHVVALSKVYYELHKKEINISFIVGQVQRARRQTTAVNSLWKGDKALLRLLGKGLILELSEASEIKLGLLERYASSIYKDGLNPGHIEEMKRLVSWPYTNSNRFGIEIADISKRVKAYVYFLVVSINCLFFVVIFLLMKKTRSSIDEIVHVMNDMSRGDLTYRTIPSNDEVGKMQSSIIAMGAGVSALIESIKHIQGDLFNSAGEALNISQSTSNDICDQAGKIDEFVSALSQISFAITETSNAANKSSALSSEGRQLAVHGQKAIETAVSSINALSQRVNDSHVAIKCIEADIAKIGKIIEIIDQITDQTNLLALNAAIEAAHAGEAGKGFAVVADEVRSLAQRTNNSTYEIQAMIASLNKGIFFALGVMGDCVVESKNSVNAASEASRSIEKIVDSVSQVMLQIAQVATASEEQSAVVKDMLDNANIIREIAAGVELGSRRISEVNTHR</sequence>
<name>ALKN_ECTOL</name>
<protein>
    <recommendedName>
        <fullName>Putative methyl-accepting chemotaxis AlkN</fullName>
    </recommendedName>
</protein>
<geneLocation type="plasmid">
    <name>OCT</name>
</geneLocation>
<accession>Q9R9U8</accession>
<dbReference type="EMBL" id="AJ245436">
    <property type="protein sequence ID" value="CAB54058.1"/>
    <property type="molecule type" value="Genomic_DNA"/>
</dbReference>
<dbReference type="SMR" id="Q9R9U8"/>
<dbReference type="UniPathway" id="UPA00191"/>
<dbReference type="GO" id="GO:0016020">
    <property type="term" value="C:membrane"/>
    <property type="evidence" value="ECO:0007669"/>
    <property type="project" value="UniProtKB-SubCell"/>
</dbReference>
<dbReference type="GO" id="GO:0004888">
    <property type="term" value="F:transmembrane signaling receptor activity"/>
    <property type="evidence" value="ECO:0007669"/>
    <property type="project" value="InterPro"/>
</dbReference>
<dbReference type="GO" id="GO:0043448">
    <property type="term" value="P:alkane catabolic process"/>
    <property type="evidence" value="ECO:0007669"/>
    <property type="project" value="UniProtKB-UniPathway"/>
</dbReference>
<dbReference type="GO" id="GO:0006935">
    <property type="term" value="P:chemotaxis"/>
    <property type="evidence" value="ECO:0007669"/>
    <property type="project" value="InterPro"/>
</dbReference>
<dbReference type="GO" id="GO:0007165">
    <property type="term" value="P:signal transduction"/>
    <property type="evidence" value="ECO:0007669"/>
    <property type="project" value="UniProtKB-KW"/>
</dbReference>
<dbReference type="CDD" id="cd06225">
    <property type="entry name" value="HAMP"/>
    <property type="match status" value="1"/>
</dbReference>
<dbReference type="CDD" id="cd11386">
    <property type="entry name" value="MCP_signal"/>
    <property type="match status" value="1"/>
</dbReference>
<dbReference type="FunFam" id="1.10.287.950:FF:000001">
    <property type="entry name" value="Methyl-accepting chemotaxis sensory transducer"/>
    <property type="match status" value="1"/>
</dbReference>
<dbReference type="Gene3D" id="1.10.287.950">
    <property type="entry name" value="Methyl-accepting chemotaxis protein"/>
    <property type="match status" value="1"/>
</dbReference>
<dbReference type="InterPro" id="IPR004090">
    <property type="entry name" value="Chemotax_Me-accpt_rcpt"/>
</dbReference>
<dbReference type="InterPro" id="IPR003660">
    <property type="entry name" value="HAMP_dom"/>
</dbReference>
<dbReference type="InterPro" id="IPR004089">
    <property type="entry name" value="MCPsignal_dom"/>
</dbReference>
<dbReference type="PANTHER" id="PTHR32089:SF119">
    <property type="entry name" value="METHYL-ACCEPTING CHEMOTAXIS PROTEIN CTPL"/>
    <property type="match status" value="1"/>
</dbReference>
<dbReference type="PANTHER" id="PTHR32089">
    <property type="entry name" value="METHYL-ACCEPTING CHEMOTAXIS PROTEIN MCPB"/>
    <property type="match status" value="1"/>
</dbReference>
<dbReference type="Pfam" id="PF00672">
    <property type="entry name" value="HAMP"/>
    <property type="match status" value="1"/>
</dbReference>
<dbReference type="Pfam" id="PF00015">
    <property type="entry name" value="MCPsignal"/>
    <property type="match status" value="1"/>
</dbReference>
<dbReference type="PRINTS" id="PR00260">
    <property type="entry name" value="CHEMTRNSDUCR"/>
</dbReference>
<dbReference type="SMART" id="SM00283">
    <property type="entry name" value="MA"/>
    <property type="match status" value="1"/>
</dbReference>
<dbReference type="SUPFAM" id="SSF58104">
    <property type="entry name" value="Methyl-accepting chemotaxis protein (MCP) signaling domain"/>
    <property type="match status" value="1"/>
</dbReference>
<dbReference type="PROSITE" id="PS50111">
    <property type="entry name" value="CHEMOTAXIS_TRANSDUC_2"/>
    <property type="match status" value="1"/>
</dbReference>
<dbReference type="PROSITE" id="PS50885">
    <property type="entry name" value="HAMP"/>
    <property type="match status" value="1"/>
</dbReference>
<proteinExistence type="inferred from homology"/>
<reference key="1">
    <citation type="journal article" date="2001" name="Microbiology">
        <title>Analysis of Pseudomonas putida alkane degradation gene clusters and flanking insertion sequences: evolution and regulation of the alk-genes.</title>
        <authorList>
            <person name="Van Beilen J.B."/>
            <person name="Panke S."/>
            <person name="Lucchini S."/>
            <person name="Franchini A.G."/>
            <person name="Roethlisberger M."/>
            <person name="Witholt B."/>
        </authorList>
    </citation>
    <scope>NUCLEOTIDE SEQUENCE [GENOMIC DNA]</scope>
    <scope>PATHWAY</scope>
    <source>
        <strain>ATCC 29347 / CIP 105816 / NRRL B-14683 / TF4-1L</strain>
    </source>
</reference>
<evidence type="ECO:0000250" key="1"/>
<evidence type="ECO:0000255" key="2"/>
<evidence type="ECO:0000255" key="3">
    <source>
        <dbReference type="PROSITE-ProRule" id="PRU00102"/>
    </source>
</evidence>
<evidence type="ECO:0000255" key="4">
    <source>
        <dbReference type="PROSITE-ProRule" id="PRU00284"/>
    </source>
</evidence>
<evidence type="ECO:0000269" key="5">
    <source>
    </source>
</evidence>
<evidence type="ECO:0000305" key="6"/>
<keyword id="KW-0472">Membrane</keyword>
<keyword id="KW-0614">Plasmid</keyword>
<keyword id="KW-0807">Transducer</keyword>
<keyword id="KW-0812">Transmembrane</keyword>
<keyword id="KW-1133">Transmembrane helix</keyword>